<organism>
    <name type="scientific">Coprinellus congregatus</name>
    <name type="common">Inky cap fungus</name>
    <name type="synonym">Coprinus congregatus</name>
    <dbReference type="NCBI Taxonomy" id="5347"/>
    <lineage>
        <taxon>Eukaryota</taxon>
        <taxon>Fungi</taxon>
        <taxon>Dikarya</taxon>
        <taxon>Basidiomycota</taxon>
        <taxon>Agaricomycotina</taxon>
        <taxon>Agaricomycetes</taxon>
        <taxon>Agaricomycetidae</taxon>
        <taxon>Agaricales</taxon>
        <taxon>Agaricineae</taxon>
        <taxon>Psathyrellaceae</taxon>
        <taxon>Coprinellus</taxon>
    </lineage>
</organism>
<protein>
    <recommendedName>
        <fullName>Guanine nucleotide-binding protein subunit alpha</fullName>
    </recommendedName>
</protein>
<evidence type="ECO:0000250" key="1"/>
<evidence type="ECO:0000250" key="2">
    <source>
        <dbReference type="UniProtKB" id="P08539"/>
    </source>
</evidence>
<evidence type="ECO:0000250" key="3">
    <source>
        <dbReference type="UniProtKB" id="P18064"/>
    </source>
</evidence>
<evidence type="ECO:0000255" key="4">
    <source>
        <dbReference type="PROSITE-ProRule" id="PRU01230"/>
    </source>
</evidence>
<evidence type="ECO:0000305" key="5"/>
<reference key="1">
    <citation type="journal article" date="1995" name="Gene">
        <title>Cloning and characterization of a G protein alpha-subunit-encoding gene from the basidiomycete, Coprinus congregatus.</title>
        <authorList>
            <person name="Kozak K.R."/>
            <person name="Foster L.M."/>
            <person name="Ross I.K."/>
        </authorList>
    </citation>
    <scope>NUCLEOTIDE SEQUENCE [MRNA]</scope>
    <source>
        <strain>California</strain>
    </source>
</reference>
<name>GPA1_COPCO</name>
<accession>P30675</accession>
<keyword id="KW-0342">GTP-binding</keyword>
<keyword id="KW-0378">Hydrolase</keyword>
<keyword id="KW-0449">Lipoprotein</keyword>
<keyword id="KW-0460">Magnesium</keyword>
<keyword id="KW-0479">Metal-binding</keyword>
<keyword id="KW-0519">Myristate</keyword>
<keyword id="KW-0547">Nucleotide-binding</keyword>
<keyword id="KW-0564">Palmitate</keyword>
<keyword id="KW-0807">Transducer</keyword>
<sequence length="353" mass="40034">MGCVQSTGVDDEAKARNDEIENQLKRDRVMAKNEIKMLLLGAGESGKSTVLKQMKLIHHGGYSDQEKDSYKEIIFSNTVQSMRAILDALPALDLALQPANDARRATILAVPGQIEAEVLPRDIADAIRQLWADPGLKEAVRRSREFQLNDSAVYYFNSIDRMSAPGYLPTDQDILRSRVKTTGITETTFKVGELTYKLFDVGGQRSERKKWIHCFENVTALVFLVSLSEYDQMLYEDESVNRMQEALTLFDSICNSRWFVKTSIILFLNKIDLFAEKLPARRSTYFPDFTGGDNYDAACDYLLHRFVSLNQSAATKQIYAHYTCATDTQQIKFVLSAIQDILLQLHLRECGLL</sequence>
<feature type="initiator methionine" description="Removed" evidence="1">
    <location>
        <position position="1"/>
    </location>
</feature>
<feature type="chain" id="PRO_0000203598" description="Guanine nucleotide-binding protein subunit alpha">
    <location>
        <begin position="2"/>
        <end position="353"/>
    </location>
</feature>
<feature type="domain" description="G-alpha" evidence="4">
    <location>
        <begin position="33"/>
        <end position="353"/>
    </location>
</feature>
<feature type="region of interest" description="G1 motif" evidence="4">
    <location>
        <begin position="36"/>
        <end position="49"/>
    </location>
</feature>
<feature type="region of interest" description="G2 motif" evidence="4">
    <location>
        <begin position="173"/>
        <end position="181"/>
    </location>
</feature>
<feature type="region of interest" description="G3 motif" evidence="4">
    <location>
        <begin position="196"/>
        <end position="205"/>
    </location>
</feature>
<feature type="region of interest" description="G4 motif" evidence="4">
    <location>
        <begin position="265"/>
        <end position="272"/>
    </location>
</feature>
<feature type="region of interest" description="G5 motif" evidence="4">
    <location>
        <begin position="323"/>
        <end position="328"/>
    </location>
</feature>
<feature type="binding site" evidence="3">
    <location>
        <position position="44"/>
    </location>
    <ligand>
        <name>GTP</name>
        <dbReference type="ChEBI" id="CHEBI:37565"/>
    </ligand>
</feature>
<feature type="binding site" evidence="3">
    <location>
        <position position="45"/>
    </location>
    <ligand>
        <name>GTP</name>
        <dbReference type="ChEBI" id="CHEBI:37565"/>
    </ligand>
</feature>
<feature type="binding site" evidence="3">
    <location>
        <position position="46"/>
    </location>
    <ligand>
        <name>GTP</name>
        <dbReference type="ChEBI" id="CHEBI:37565"/>
    </ligand>
</feature>
<feature type="binding site" evidence="3">
    <location>
        <position position="47"/>
    </location>
    <ligand>
        <name>GTP</name>
        <dbReference type="ChEBI" id="CHEBI:37565"/>
    </ligand>
</feature>
<feature type="binding site" evidence="3">
    <location>
        <position position="48"/>
    </location>
    <ligand>
        <name>GTP</name>
        <dbReference type="ChEBI" id="CHEBI:37565"/>
    </ligand>
</feature>
<feature type="binding site" evidence="3">
    <location>
        <position position="48"/>
    </location>
    <ligand>
        <name>Mg(2+)</name>
        <dbReference type="ChEBI" id="CHEBI:18420"/>
    </ligand>
</feature>
<feature type="binding site" evidence="3">
    <location>
        <position position="49"/>
    </location>
    <ligand>
        <name>GTP</name>
        <dbReference type="ChEBI" id="CHEBI:37565"/>
    </ligand>
</feature>
<feature type="binding site" evidence="3">
    <location>
        <position position="150"/>
    </location>
    <ligand>
        <name>GTP</name>
        <dbReference type="ChEBI" id="CHEBI:37565"/>
    </ligand>
</feature>
<feature type="binding site" evidence="3">
    <location>
        <position position="175"/>
    </location>
    <ligand>
        <name>GTP</name>
        <dbReference type="ChEBI" id="CHEBI:37565"/>
    </ligand>
</feature>
<feature type="binding site" evidence="3">
    <location>
        <position position="181"/>
    </location>
    <ligand>
        <name>GTP</name>
        <dbReference type="ChEBI" id="CHEBI:37565"/>
    </ligand>
</feature>
<feature type="binding site" evidence="3">
    <location>
        <position position="181"/>
    </location>
    <ligand>
        <name>Mg(2+)</name>
        <dbReference type="ChEBI" id="CHEBI:18420"/>
    </ligand>
</feature>
<feature type="binding site" evidence="3">
    <location>
        <position position="203"/>
    </location>
    <ligand>
        <name>GTP</name>
        <dbReference type="ChEBI" id="CHEBI:37565"/>
    </ligand>
</feature>
<feature type="binding site" evidence="3">
    <location>
        <position position="269"/>
    </location>
    <ligand>
        <name>GTP</name>
        <dbReference type="ChEBI" id="CHEBI:37565"/>
    </ligand>
</feature>
<feature type="binding site" evidence="3">
    <location>
        <position position="270"/>
    </location>
    <ligand>
        <name>GTP</name>
        <dbReference type="ChEBI" id="CHEBI:37565"/>
    </ligand>
</feature>
<feature type="binding site" evidence="3">
    <location>
        <position position="272"/>
    </location>
    <ligand>
        <name>GTP</name>
        <dbReference type="ChEBI" id="CHEBI:37565"/>
    </ligand>
</feature>
<feature type="binding site" evidence="3">
    <location>
        <position position="325"/>
    </location>
    <ligand>
        <name>GTP</name>
        <dbReference type="ChEBI" id="CHEBI:37565"/>
    </ligand>
</feature>
<feature type="lipid moiety-binding region" description="N-myristoyl glycine" evidence="2">
    <location>
        <position position="2"/>
    </location>
</feature>
<feature type="lipid moiety-binding region" description="S-palmitoyl cysteine" evidence="2">
    <location>
        <position position="3"/>
    </location>
</feature>
<dbReference type="EMBL" id="X68031">
    <property type="protein sequence ID" value="CAA48172.1"/>
    <property type="molecule type" value="mRNA"/>
</dbReference>
<dbReference type="PIR" id="S25493">
    <property type="entry name" value="S25493"/>
</dbReference>
<dbReference type="SMR" id="P30675"/>
<dbReference type="GO" id="GO:0005737">
    <property type="term" value="C:cytoplasm"/>
    <property type="evidence" value="ECO:0007669"/>
    <property type="project" value="TreeGrafter"/>
</dbReference>
<dbReference type="GO" id="GO:0005834">
    <property type="term" value="C:heterotrimeric G-protein complex"/>
    <property type="evidence" value="ECO:0007669"/>
    <property type="project" value="InterPro"/>
</dbReference>
<dbReference type="GO" id="GO:0001664">
    <property type="term" value="F:G protein-coupled receptor binding"/>
    <property type="evidence" value="ECO:0007669"/>
    <property type="project" value="InterPro"/>
</dbReference>
<dbReference type="GO" id="GO:0031683">
    <property type="term" value="F:G-protein beta/gamma-subunit complex binding"/>
    <property type="evidence" value="ECO:0007669"/>
    <property type="project" value="InterPro"/>
</dbReference>
<dbReference type="GO" id="GO:0005525">
    <property type="term" value="F:GTP binding"/>
    <property type="evidence" value="ECO:0007669"/>
    <property type="project" value="UniProtKB-KW"/>
</dbReference>
<dbReference type="GO" id="GO:0003924">
    <property type="term" value="F:GTPase activity"/>
    <property type="evidence" value="ECO:0007669"/>
    <property type="project" value="InterPro"/>
</dbReference>
<dbReference type="GO" id="GO:0046872">
    <property type="term" value="F:metal ion binding"/>
    <property type="evidence" value="ECO:0007669"/>
    <property type="project" value="UniProtKB-KW"/>
</dbReference>
<dbReference type="GO" id="GO:0007186">
    <property type="term" value="P:G protein-coupled receptor signaling pathway"/>
    <property type="evidence" value="ECO:0007669"/>
    <property type="project" value="InterPro"/>
</dbReference>
<dbReference type="GO" id="GO:0000750">
    <property type="term" value="P:pheromone-dependent signal transduction involved in conjugation with cellular fusion"/>
    <property type="evidence" value="ECO:0007669"/>
    <property type="project" value="TreeGrafter"/>
</dbReference>
<dbReference type="CDD" id="cd00066">
    <property type="entry name" value="G-alpha"/>
    <property type="match status" value="1"/>
</dbReference>
<dbReference type="FunFam" id="3.40.50.300:FF:002307">
    <property type="entry name" value="Guanine nucleotide-binding protein G(k) subunit alpha"/>
    <property type="match status" value="1"/>
</dbReference>
<dbReference type="FunFam" id="1.10.400.10:FF:000007">
    <property type="entry name" value="Guanine nucleotide-binding protein subunit alpha"/>
    <property type="match status" value="1"/>
</dbReference>
<dbReference type="FunFam" id="3.40.50.300:FF:000692">
    <property type="entry name" value="Guanine nucleotide-binding protein subunit alpha"/>
    <property type="match status" value="1"/>
</dbReference>
<dbReference type="Gene3D" id="1.10.400.10">
    <property type="entry name" value="GI Alpha 1, domain 2-like"/>
    <property type="match status" value="1"/>
</dbReference>
<dbReference type="Gene3D" id="3.40.50.300">
    <property type="entry name" value="P-loop containing nucleotide triphosphate hydrolases"/>
    <property type="match status" value="1"/>
</dbReference>
<dbReference type="InterPro" id="IPR002975">
    <property type="entry name" value="Fungi_Gprotein_alpha"/>
</dbReference>
<dbReference type="InterPro" id="IPR001019">
    <property type="entry name" value="Gprotein_alpha_su"/>
</dbReference>
<dbReference type="InterPro" id="IPR011025">
    <property type="entry name" value="GproteinA_insert"/>
</dbReference>
<dbReference type="InterPro" id="IPR027417">
    <property type="entry name" value="P-loop_NTPase"/>
</dbReference>
<dbReference type="PANTHER" id="PTHR10218">
    <property type="entry name" value="GTP-BINDING PROTEIN ALPHA SUBUNIT"/>
    <property type="match status" value="1"/>
</dbReference>
<dbReference type="PANTHER" id="PTHR10218:SF302">
    <property type="entry name" value="GUANINE NUCLEOTIDE-BINDING PROTEIN ALPHA-5 SUBUNIT"/>
    <property type="match status" value="1"/>
</dbReference>
<dbReference type="Pfam" id="PF00503">
    <property type="entry name" value="G-alpha"/>
    <property type="match status" value="1"/>
</dbReference>
<dbReference type="PRINTS" id="PR00318">
    <property type="entry name" value="GPROTEINA"/>
</dbReference>
<dbReference type="PRINTS" id="PR01241">
    <property type="entry name" value="GPROTEINAFNG"/>
</dbReference>
<dbReference type="SMART" id="SM00275">
    <property type="entry name" value="G_alpha"/>
    <property type="match status" value="1"/>
</dbReference>
<dbReference type="SUPFAM" id="SSF52540">
    <property type="entry name" value="P-loop containing nucleoside triphosphate hydrolases"/>
    <property type="match status" value="1"/>
</dbReference>
<dbReference type="SUPFAM" id="SSF47895">
    <property type="entry name" value="Transducin (alpha subunit), insertion domain"/>
    <property type="match status" value="1"/>
</dbReference>
<dbReference type="PROSITE" id="PS51882">
    <property type="entry name" value="G_ALPHA"/>
    <property type="match status" value="1"/>
</dbReference>
<comment type="function">
    <text>Guanine nucleotide-binding proteins (G proteins) are involved as modulators or transducers in various transmembrane signaling systems.</text>
</comment>
<comment type="cofactor">
    <cofactor evidence="3">
        <name>Mg(2+)</name>
        <dbReference type="ChEBI" id="CHEBI:18420"/>
    </cofactor>
</comment>
<comment type="subunit">
    <text>G proteins are composed of 3 units; alpha, beta and gamma. The alpha chain contains the guanine nucleotide binding site.</text>
</comment>
<comment type="similarity">
    <text evidence="5">Belongs to the G-alpha family. G(q) subfamily.</text>
</comment>
<proteinExistence type="evidence at transcript level"/>
<gene>
    <name type="primary">CGP1</name>
</gene>